<organismHost>
    <name type="scientific">Homo sapiens</name>
    <name type="common">Human</name>
    <dbReference type="NCBI Taxonomy" id="9606"/>
</organismHost>
<sequence>MAPKKKLQLPPPPTDEEEYWDSQAEEVLDEEEEDMMEDWESLDEEASEVEEVSDETPSPSVAFPSPAPQKSATGSSMATTSAPQAPPALPVRRPNRRWDTTGTRAAHTAPAAAAAAATAAATQKQRRPDSKTLTKPKKSTAAAAAGGGALRLAPNEPVSTRELRNRIFPTLYAIFQQSRGQEQELKIKNRSLRSLTRSCLYHKSEDQLRRTLEDAEALFSKYCALTLKD</sequence>
<name>SF33K_ADE05</name>
<comment type="function">
    <text evidence="4 5">Promotes alternative splicing of late transcripts by promoting splicing at weak 3' splice sites. Required for the temporal activation of major late pre-mRNA splicing at late times of infection. Induces the splicing and expression of the late capsid vertex protein.</text>
</comment>
<comment type="function">
    <text evidence="7 8 9">Probably functions as the small terminase that is part of the molecular motor that translocates genomic DNA in empty capsid during DNA packaging. This motor is located at a unique vertex and comprises at least the IVa2 ATPase, the small terminase 33K and probably a portal. Forms a ring-like structure of about 17 nm in which genomic DNA is translocated into the capsid. Stimulates IVa2 ATPase activity in the presence of the viral genome. Once the DNA is packaged, the terminase detaches: the 33K protein is present in the empty particles, but not in the mature virions. Also involved in virion assembly.</text>
</comment>
<comment type="subunit">
    <text evidence="7">Homooligomer. Interacts with DBP; this interaction occurs at a unique vertex during genome packaging. Interacts with IVa2; this interaction occurs at a unique vertex during genome packaging and seems to potentiate IVa2 and 33K oligomerization.</text>
</comment>
<comment type="subcellular location">
    <subcellularLocation>
        <location evidence="6 7">Host nucleus</location>
    </subcellularLocation>
    <text evidence="6">At late time of infection, reorganized from the nuclear margin to ring-like structures at viral replication centers.</text>
</comment>
<comment type="alternative products">
    <event type="alternative splicing"/>
    <isoform>
        <id>P24940-1</id>
        <name>Protein 33K</name>
        <name>Splicing factor 33K</name>
        <name>L4-33K</name>
        <sequence type="displayed"/>
    </isoform>
    <isoform>
        <id>Q2KS03-1</id>
        <name>Packaging protein 2</name>
        <name>Packaging protein 22K</name>
        <name>L4-22K</name>
        <sequence type="external"/>
    </isoform>
</comment>
<comment type="induction">
    <text>Expressed in the late phase of the viral replicative cycle.</text>
</comment>
<comment type="domain">
    <text>The tiny Arg-Ser repeat region (RS repeat) is necessary for the splicing enhancer function.</text>
</comment>
<comment type="PTM">
    <text evidence="1">Phosphorylated in vitro by human PKA and PRKDC. PRKDC inhibits, whereas PKA activates the splicing factor (By similarity).</text>
</comment>
<comment type="miscellaneous">
    <text>All late proteins expressed from the major late promoter are produced by alternative splicing and alternative polyadenylation of the same gene giving rise to non-overlapping ORFs. Expression of packaging protein 2 and splicing factor is controlled by a L4 promoter distinct from the major late promoter.</text>
</comment>
<comment type="miscellaneous">
    <molecule>Isoform Protein 33K</molecule>
    <text>Spliced isoform.</text>
</comment>
<comment type="similarity">
    <text evidence="11">Belongs to the adenoviridae splicing factor family.</text>
</comment>
<dbReference type="EMBL" id="M73260">
    <property type="status" value="NOT_ANNOTATED_CDS"/>
    <property type="molecule type" value="Genomic_DNA"/>
</dbReference>
<dbReference type="PIR" id="F39449">
    <property type="entry name" value="WMAD51"/>
</dbReference>
<dbReference type="RefSeq" id="AP_000215.1">
    <molecule id="P24940-1"/>
    <property type="nucleotide sequence ID" value="AC_000008.1"/>
</dbReference>
<dbReference type="Proteomes" id="UP000004992">
    <property type="component" value="Genome"/>
</dbReference>
<dbReference type="GO" id="GO:0042025">
    <property type="term" value="C:host cell nucleus"/>
    <property type="evidence" value="ECO:0000314"/>
    <property type="project" value="UniProtKB"/>
</dbReference>
<dbReference type="GO" id="GO:0098009">
    <property type="term" value="C:viral terminase, large subunit"/>
    <property type="evidence" value="ECO:0000314"/>
    <property type="project" value="UniProtKB"/>
</dbReference>
<dbReference type="GO" id="GO:0006397">
    <property type="term" value="P:mRNA processing"/>
    <property type="evidence" value="ECO:0007669"/>
    <property type="project" value="UniProtKB-KW"/>
</dbReference>
<dbReference type="GO" id="GO:0043484">
    <property type="term" value="P:regulation of RNA splicing"/>
    <property type="evidence" value="ECO:0000314"/>
    <property type="project" value="UniProtKB"/>
</dbReference>
<dbReference type="GO" id="GO:0019073">
    <property type="term" value="P:viral DNA genome packaging"/>
    <property type="evidence" value="ECO:0007669"/>
    <property type="project" value="InterPro"/>
</dbReference>
<dbReference type="GO" id="GO:0019072">
    <property type="term" value="P:viral genome packaging"/>
    <property type="evidence" value="ECO:0000314"/>
    <property type="project" value="UniProtKB"/>
</dbReference>
<dbReference type="InterPro" id="IPR021304">
    <property type="entry name" value="Adeno_L4-33K/L4-22K"/>
</dbReference>
<dbReference type="Pfam" id="PF11081">
    <property type="entry name" value="Adeno_L433K_22K"/>
    <property type="match status" value="1"/>
</dbReference>
<accession>P24940</accession>
<feature type="chain" id="PRO_0000221912" description="Protein 33K">
    <location>
        <begin position="1"/>
        <end position="229"/>
    </location>
</feature>
<feature type="region of interest" description="Disordered" evidence="3">
    <location>
        <begin position="1"/>
        <end position="157"/>
    </location>
</feature>
<feature type="region of interest" description="Necessary for nuclear subcellular location" evidence="1">
    <location>
        <begin position="172"/>
        <end position="199"/>
    </location>
</feature>
<feature type="region of interest" description="RS-repeat; required for splicing enhancer activity" evidence="1">
    <location>
        <begin position="178"/>
        <end position="198"/>
    </location>
</feature>
<feature type="compositionally biased region" description="Acidic residues" evidence="3">
    <location>
        <begin position="14"/>
        <end position="54"/>
    </location>
</feature>
<feature type="compositionally biased region" description="Low complexity" evidence="3">
    <location>
        <begin position="55"/>
        <end position="64"/>
    </location>
</feature>
<feature type="compositionally biased region" description="Low complexity" evidence="3">
    <location>
        <begin position="71"/>
        <end position="82"/>
    </location>
</feature>
<feature type="compositionally biased region" description="Low complexity" evidence="3">
    <location>
        <begin position="100"/>
        <end position="122"/>
    </location>
</feature>
<feature type="mutagenesis site" description="No effect on nuclear subcellular location. No effect on splicing enhancer activity." evidence="4 6">
    <original>S</original>
    <variation>G</variation>
    <location>
        <position position="178"/>
    </location>
</feature>
<feature type="mutagenesis site" description="No effect on nuclear subcellular location. No effect on splicing enhancer activity." evidence="4 6">
    <original>S</original>
    <variation>G</variation>
    <location>
        <position position="191"/>
    </location>
</feature>
<feature type="mutagenesis site" description="50% redistribution of subcellular location to the cytoplasm. Complete loss of splicing enhancer activity. Loss of colocalization in viral replication centers." evidence="4 6">
    <original>S</original>
    <variation>G</variation>
    <location>
        <position position="194"/>
    </location>
</feature>
<feature type="mutagenesis site" description="No effect on nuclear subcellular location. No effect on splicing enhancer activity." evidence="4 6">
    <original>S</original>
    <variation>G</variation>
    <location>
        <position position="198"/>
    </location>
</feature>
<feature type="sequence conflict" description="In Ref. 2; no nucleotide entry." evidence="11" ref="2">
    <location>
        <begin position="116"/>
        <end position="117"/>
    </location>
</feature>
<keyword id="KW-0025">Alternative splicing</keyword>
<keyword id="KW-1048">Host nucleus</keyword>
<keyword id="KW-0945">Host-virus interaction</keyword>
<keyword id="KW-0426">Late protein</keyword>
<keyword id="KW-0507">mRNA processing</keyword>
<keyword id="KW-0597">Phosphoprotein</keyword>
<keyword id="KW-1185">Reference proteome</keyword>
<keyword id="KW-0118">Viral capsid assembly</keyword>
<keyword id="KW-0231">Viral genome packaging</keyword>
<keyword id="KW-1188">Viral release from host cell</keyword>
<protein>
    <recommendedName>
        <fullName evidence="2">Protein 33K</fullName>
        <shortName>L4-33K</shortName>
    </recommendedName>
    <alternativeName>
        <fullName evidence="11">Splicing factor 33K</fullName>
    </alternativeName>
    <alternativeName>
        <fullName evidence="10">Terminase, small subunit</fullName>
    </alternativeName>
</protein>
<reference key="1">
    <citation type="journal article" date="1992" name="Virology">
        <title>The sequence of the genome of adenovirus type 5 and its comparison with the genome of adenovirus type 2.</title>
        <authorList>
            <person name="Chroboczek J."/>
            <person name="Bieber F."/>
            <person name="Jacrot B."/>
        </authorList>
    </citation>
    <scope>NUCLEOTIDE SEQUENCE [GENOMIC DNA]</scope>
</reference>
<reference key="2">
    <citation type="journal article" date="2012" name="Nat. Methods">
        <title>De novo derivation of proteomes from transcriptomes for transcript and protein identification.</title>
        <authorList>
            <person name="Evans V.C."/>
            <person name="Barker G."/>
            <person name="Heesom K.J."/>
            <person name="Fan J."/>
            <person name="Bessant C."/>
            <person name="Matthews D.A."/>
        </authorList>
    </citation>
    <scope>NUCLEOTIDE SEQUENCE [MRNA]</scope>
</reference>
<reference key="3">
    <citation type="journal article" date="2006" name="J. Biol. Chem.">
        <title>L4-33K, an adenovirus-encoded alternative RNA splicing factor.</title>
        <authorList>
            <person name="Tormanen H."/>
            <person name="Backstrom E."/>
            <person name="Carlsson A."/>
            <person name="Akusjarvi G."/>
        </authorList>
    </citation>
    <scope>FUNCTION</scope>
    <scope>MUTAGENESIS OF SER-178; SER-191; SER-194 AND SER-198</scope>
</reference>
<reference key="4">
    <citation type="journal article" date="2009" name="J. Virol.">
        <title>Adenovirus serotype 5 L4-22K and L4-33K proteins have distinct functions in regulating late gene expression.</title>
        <authorList>
            <person name="Morris S.J."/>
            <person name="Leppard K.N."/>
        </authorList>
    </citation>
    <scope>FUNCTION</scope>
</reference>
<reference key="5">
    <citation type="journal article" date="2012" name="Virology">
        <title>Serine 192 in the tiny RS repeat of the adenoviral L4-33K splicing enhancer protein is essential for function and reorganization of the protein to the periphery of viral replication centers.</title>
        <authorList>
            <person name="Ostberg S."/>
            <person name="Tormanen Persson H."/>
            <person name="Akusjarvi G."/>
        </authorList>
    </citation>
    <scope>SUBCELLULAR LOCATION</scope>
    <scope>MUTAGENESIS OF SER-178; SER-191; SER-194 AND SER-198</scope>
</reference>
<reference key="6">
    <citation type="journal article" date="2013" name="J. Virol.">
        <title>The adenovirus L4-33K protein regulates both late gene expression patterns and viral DNA packaging.</title>
        <authorList>
            <person name="Wu K."/>
            <person name="Guimet D."/>
            <person name="Hearing P."/>
        </authorList>
    </citation>
    <scope>FUNCTION</scope>
</reference>
<reference key="7">
    <citation type="journal article" date="2013" name="J. Gen. Virol.">
        <title>Adenoviral E2 IVa2 protein interacts with L4 33K protein and E2 DNA-binding protein.</title>
        <authorList>
            <person name="Ahi Y.S."/>
            <person name="Vemula S.V."/>
            <person name="Mittal S.K."/>
        </authorList>
    </citation>
    <scope>FUNCTION</scope>
    <scope>SUBCELLULAR LOCATION</scope>
    <scope>INTERACTION WITH DBP</scope>
    <scope>INTERACTION WITH IVA2</scope>
</reference>
<reference key="8">
    <citation type="journal article" date="2015" name="Front. Microbiol.">
        <title>Adenoviral L4 33K forms ring-like oligomers and stimulates ATPase activity of IVa2: implications in viral genome packaging.</title>
        <authorList>
            <person name="Ahi Y.S."/>
            <person name="Vemula S.V."/>
            <person name="Hassan A.O."/>
            <person name="Costakes G."/>
            <person name="Stauffacher C."/>
            <person name="Mittal S.K."/>
        </authorList>
    </citation>
    <scope>FUNCTION</scope>
</reference>
<proteinExistence type="evidence at protein level"/>
<evidence type="ECO:0000250" key="1"/>
<evidence type="ECO:0000250" key="2">
    <source>
        <dbReference type="UniProtKB" id="P24939"/>
    </source>
</evidence>
<evidence type="ECO:0000256" key="3">
    <source>
        <dbReference type="SAM" id="MobiDB-lite"/>
    </source>
</evidence>
<evidence type="ECO:0000269" key="4">
    <source>
    </source>
</evidence>
<evidence type="ECO:0000269" key="5">
    <source>
    </source>
</evidence>
<evidence type="ECO:0000269" key="6">
    <source>
    </source>
</evidence>
<evidence type="ECO:0000269" key="7">
    <source>
    </source>
</evidence>
<evidence type="ECO:0000269" key="8">
    <source>
    </source>
</evidence>
<evidence type="ECO:0000269" key="9">
    <source>
    </source>
</evidence>
<evidence type="ECO:0000303" key="10">
    <source>
    </source>
</evidence>
<evidence type="ECO:0000305" key="11"/>
<organism>
    <name type="scientific">Human adenovirus C serotype 5</name>
    <name type="common">HAdV-5</name>
    <name type="synonym">Human adenovirus 5</name>
    <dbReference type="NCBI Taxonomy" id="28285"/>
    <lineage>
        <taxon>Viruses</taxon>
        <taxon>Varidnaviria</taxon>
        <taxon>Bamfordvirae</taxon>
        <taxon>Preplasmiviricota</taxon>
        <taxon>Tectiliviricetes</taxon>
        <taxon>Rowavirales</taxon>
        <taxon>Adenoviridae</taxon>
        <taxon>Mastadenovirus</taxon>
        <taxon>Human mastadenovirus C</taxon>
    </lineage>
</organism>
<gene>
    <name type="ORF">L4</name>
</gene>